<organism>
    <name type="scientific">Vibrio vulnificus (strain YJ016)</name>
    <dbReference type="NCBI Taxonomy" id="196600"/>
    <lineage>
        <taxon>Bacteria</taxon>
        <taxon>Pseudomonadati</taxon>
        <taxon>Pseudomonadota</taxon>
        <taxon>Gammaproteobacteria</taxon>
        <taxon>Vibrionales</taxon>
        <taxon>Vibrionaceae</taxon>
        <taxon>Vibrio</taxon>
    </lineage>
</organism>
<keyword id="KW-0963">Cytoplasm</keyword>
<keyword id="KW-0342">GTP-binding</keyword>
<keyword id="KW-0547">Nucleotide-binding</keyword>
<keyword id="KW-0648">Protein biosynthesis</keyword>
<evidence type="ECO:0000255" key="1">
    <source>
        <dbReference type="HAMAP-Rule" id="MF_00072"/>
    </source>
</evidence>
<protein>
    <recommendedName>
        <fullName evidence="1">Peptide chain release factor 3</fullName>
        <shortName evidence="1">RF-3</shortName>
    </recommendedName>
</protein>
<feature type="chain" id="PRO_0000210982" description="Peptide chain release factor 3">
    <location>
        <begin position="1"/>
        <end position="529"/>
    </location>
</feature>
<feature type="domain" description="tr-type G">
    <location>
        <begin position="11"/>
        <end position="280"/>
    </location>
</feature>
<feature type="binding site" evidence="1">
    <location>
        <begin position="20"/>
        <end position="27"/>
    </location>
    <ligand>
        <name>GTP</name>
        <dbReference type="ChEBI" id="CHEBI:37565"/>
    </ligand>
</feature>
<feature type="binding site" evidence="1">
    <location>
        <begin position="88"/>
        <end position="92"/>
    </location>
    <ligand>
        <name>GTP</name>
        <dbReference type="ChEBI" id="CHEBI:37565"/>
    </ligand>
</feature>
<feature type="binding site" evidence="1">
    <location>
        <begin position="142"/>
        <end position="145"/>
    </location>
    <ligand>
        <name>GTP</name>
        <dbReference type="ChEBI" id="CHEBI:37565"/>
    </ligand>
</feature>
<proteinExistence type="inferred from homology"/>
<dbReference type="EMBL" id="BA000037">
    <property type="protein sequence ID" value="BAC95447.1"/>
    <property type="molecule type" value="Genomic_DNA"/>
</dbReference>
<dbReference type="RefSeq" id="WP_011151063.1">
    <property type="nucleotide sequence ID" value="NC_005139.1"/>
</dbReference>
<dbReference type="SMR" id="Q7MI34"/>
<dbReference type="STRING" id="672.VV93_v1c24040"/>
<dbReference type="KEGG" id="vvy:VV2683"/>
<dbReference type="PATRIC" id="fig|196600.6.peg.2682"/>
<dbReference type="eggNOG" id="COG4108">
    <property type="taxonomic scope" value="Bacteria"/>
</dbReference>
<dbReference type="HOGENOM" id="CLU_002794_2_1_6"/>
<dbReference type="Proteomes" id="UP000002675">
    <property type="component" value="Chromosome I"/>
</dbReference>
<dbReference type="GO" id="GO:0005829">
    <property type="term" value="C:cytosol"/>
    <property type="evidence" value="ECO:0007669"/>
    <property type="project" value="TreeGrafter"/>
</dbReference>
<dbReference type="GO" id="GO:0005525">
    <property type="term" value="F:GTP binding"/>
    <property type="evidence" value="ECO:0007669"/>
    <property type="project" value="UniProtKB-UniRule"/>
</dbReference>
<dbReference type="GO" id="GO:0003924">
    <property type="term" value="F:GTPase activity"/>
    <property type="evidence" value="ECO:0007669"/>
    <property type="project" value="InterPro"/>
</dbReference>
<dbReference type="GO" id="GO:0097216">
    <property type="term" value="F:guanosine tetraphosphate binding"/>
    <property type="evidence" value="ECO:0007669"/>
    <property type="project" value="UniProtKB-ARBA"/>
</dbReference>
<dbReference type="GO" id="GO:0016150">
    <property type="term" value="F:translation release factor activity, codon nonspecific"/>
    <property type="evidence" value="ECO:0007669"/>
    <property type="project" value="TreeGrafter"/>
</dbReference>
<dbReference type="GO" id="GO:0016149">
    <property type="term" value="F:translation release factor activity, codon specific"/>
    <property type="evidence" value="ECO:0007669"/>
    <property type="project" value="UniProtKB-UniRule"/>
</dbReference>
<dbReference type="GO" id="GO:0006449">
    <property type="term" value="P:regulation of translational termination"/>
    <property type="evidence" value="ECO:0007669"/>
    <property type="project" value="UniProtKB-UniRule"/>
</dbReference>
<dbReference type="CDD" id="cd04169">
    <property type="entry name" value="RF3"/>
    <property type="match status" value="1"/>
</dbReference>
<dbReference type="CDD" id="cd03689">
    <property type="entry name" value="RF3_II"/>
    <property type="match status" value="1"/>
</dbReference>
<dbReference type="CDD" id="cd16259">
    <property type="entry name" value="RF3_III"/>
    <property type="match status" value="1"/>
</dbReference>
<dbReference type="FunFam" id="2.40.30.10:FF:000040">
    <property type="entry name" value="Peptide chain release factor 3"/>
    <property type="match status" value="1"/>
</dbReference>
<dbReference type="FunFam" id="3.30.70.3280:FF:000001">
    <property type="entry name" value="Peptide chain release factor 3"/>
    <property type="match status" value="1"/>
</dbReference>
<dbReference type="FunFam" id="3.40.50.300:FF:000542">
    <property type="entry name" value="Peptide chain release factor 3"/>
    <property type="match status" value="1"/>
</dbReference>
<dbReference type="Gene3D" id="3.40.50.300">
    <property type="entry name" value="P-loop containing nucleotide triphosphate hydrolases"/>
    <property type="match status" value="2"/>
</dbReference>
<dbReference type="Gene3D" id="3.30.70.3280">
    <property type="entry name" value="Peptide chain release factor 3, domain III"/>
    <property type="match status" value="1"/>
</dbReference>
<dbReference type="HAMAP" id="MF_00072">
    <property type="entry name" value="Rel_fac_3"/>
    <property type="match status" value="1"/>
</dbReference>
<dbReference type="InterPro" id="IPR053905">
    <property type="entry name" value="EF-G-like_DII"/>
</dbReference>
<dbReference type="InterPro" id="IPR035647">
    <property type="entry name" value="EFG_III/V"/>
</dbReference>
<dbReference type="InterPro" id="IPR031157">
    <property type="entry name" value="G_TR_CS"/>
</dbReference>
<dbReference type="InterPro" id="IPR027417">
    <property type="entry name" value="P-loop_NTPase"/>
</dbReference>
<dbReference type="InterPro" id="IPR004548">
    <property type="entry name" value="PrfC"/>
</dbReference>
<dbReference type="InterPro" id="IPR032090">
    <property type="entry name" value="RF3_C"/>
</dbReference>
<dbReference type="InterPro" id="IPR038467">
    <property type="entry name" value="RF3_dom_3_sf"/>
</dbReference>
<dbReference type="InterPro" id="IPR041732">
    <property type="entry name" value="RF3_GTP-bd"/>
</dbReference>
<dbReference type="InterPro" id="IPR005225">
    <property type="entry name" value="Small_GTP-bd"/>
</dbReference>
<dbReference type="InterPro" id="IPR000795">
    <property type="entry name" value="T_Tr_GTP-bd_dom"/>
</dbReference>
<dbReference type="InterPro" id="IPR009000">
    <property type="entry name" value="Transl_B-barrel_sf"/>
</dbReference>
<dbReference type="NCBIfam" id="TIGR00503">
    <property type="entry name" value="prfC"/>
    <property type="match status" value="1"/>
</dbReference>
<dbReference type="NCBIfam" id="NF001964">
    <property type="entry name" value="PRK00741.1"/>
    <property type="match status" value="1"/>
</dbReference>
<dbReference type="NCBIfam" id="TIGR00231">
    <property type="entry name" value="small_GTP"/>
    <property type="match status" value="1"/>
</dbReference>
<dbReference type="PANTHER" id="PTHR43556">
    <property type="entry name" value="PEPTIDE CHAIN RELEASE FACTOR RF3"/>
    <property type="match status" value="1"/>
</dbReference>
<dbReference type="PANTHER" id="PTHR43556:SF2">
    <property type="entry name" value="PEPTIDE CHAIN RELEASE FACTOR RF3"/>
    <property type="match status" value="1"/>
</dbReference>
<dbReference type="Pfam" id="PF22042">
    <property type="entry name" value="EF-G_D2"/>
    <property type="match status" value="1"/>
</dbReference>
<dbReference type="Pfam" id="PF00009">
    <property type="entry name" value="GTP_EFTU"/>
    <property type="match status" value="1"/>
</dbReference>
<dbReference type="Pfam" id="PF16658">
    <property type="entry name" value="RF3_C"/>
    <property type="match status" value="1"/>
</dbReference>
<dbReference type="PRINTS" id="PR00315">
    <property type="entry name" value="ELONGATNFCT"/>
</dbReference>
<dbReference type="SUPFAM" id="SSF54980">
    <property type="entry name" value="EF-G C-terminal domain-like"/>
    <property type="match status" value="1"/>
</dbReference>
<dbReference type="SUPFAM" id="SSF52540">
    <property type="entry name" value="P-loop containing nucleoside triphosphate hydrolases"/>
    <property type="match status" value="1"/>
</dbReference>
<dbReference type="SUPFAM" id="SSF50447">
    <property type="entry name" value="Translation proteins"/>
    <property type="match status" value="1"/>
</dbReference>
<dbReference type="PROSITE" id="PS00301">
    <property type="entry name" value="G_TR_1"/>
    <property type="match status" value="1"/>
</dbReference>
<dbReference type="PROSITE" id="PS51722">
    <property type="entry name" value="G_TR_2"/>
    <property type="match status" value="1"/>
</dbReference>
<name>RF3_VIBVY</name>
<accession>Q7MI34</accession>
<reference key="1">
    <citation type="journal article" date="2003" name="Genome Res.">
        <title>Comparative genome analysis of Vibrio vulnificus, a marine pathogen.</title>
        <authorList>
            <person name="Chen C.-Y."/>
            <person name="Wu K.-M."/>
            <person name="Chang Y.-C."/>
            <person name="Chang C.-H."/>
            <person name="Tsai H.-C."/>
            <person name="Liao T.-L."/>
            <person name="Liu Y.-M."/>
            <person name="Chen H.-J."/>
            <person name="Shen A.B.-T."/>
            <person name="Li J.-C."/>
            <person name="Su T.-L."/>
            <person name="Shao C.-P."/>
            <person name="Lee C.-T."/>
            <person name="Hor L.-I."/>
            <person name="Tsai S.-F."/>
        </authorList>
    </citation>
    <scope>NUCLEOTIDE SEQUENCE [LARGE SCALE GENOMIC DNA]</scope>
    <source>
        <strain>YJ016</strain>
    </source>
</reference>
<comment type="function">
    <text evidence="1">Increases the formation of ribosomal termination complexes and stimulates activities of RF-1 and RF-2. It binds guanine nucleotides and has strong preference for UGA stop codons. It may interact directly with the ribosome. The stimulation of RF-1 and RF-2 is significantly reduced by GTP and GDP, but not by GMP.</text>
</comment>
<comment type="subcellular location">
    <subcellularLocation>
        <location evidence="1">Cytoplasm</location>
    </subcellularLocation>
</comment>
<comment type="similarity">
    <text evidence="1">Belongs to the TRAFAC class translation factor GTPase superfamily. Classic translation factor GTPase family. PrfC subfamily.</text>
</comment>
<gene>
    <name evidence="1" type="primary">prfC</name>
    <name type="ordered locus">VV2683</name>
</gene>
<sequence length="529" mass="59223">MSNAPFLSEVSKRRTFAIISHPDAGKTTITEKVLLFGRAIQTAGTVKGRGSSQHAKSDWMEMEKERGISVTTSVMQFPYNDCLVNLLDTPGHEDFSEDTYRTLTAVDSCLMVIDAAKGVEDRTRKLMEVTRLRDTPIVTFMNKLDRDIRDPMELLDEVESELNIACAPVSWPIGCGKEFKGVYHIHRDETILYSTGQGHTIQEQRIIKGLDNPDLDAEVGADLAEQLREELELVLGASHEFDQEMFLKGELTPVFFGTALGNFGVDHMLDGLTDWAPAPLPRQANERAVEATEDKFTGFVFKIQANMDPKHRDRIAFMRIVSGTYTQGMKMNHVRLGKQVNISDAVTFMAGDRSRAEAAYAGDIIGLHNHGTIQIGDTFTQGELLKFSGIPNFAPELFRRIRLRDPLKQKQLLKGLVQLSEEGAVQVFRPLQNNDLIVGAVGVLQFDVVVARLKSEYNVEAIYESVNVATARWVECGDAKKLDEFQRKNQTNLALDGGDNLTYIAPTMVNLNLAKERFPEVEFRATREH</sequence>